<name>IF11_BURL3</name>
<proteinExistence type="inferred from homology"/>
<gene>
    <name evidence="1" type="primary">infA1</name>
    <name type="ordered locus">Bcep18194_B1450</name>
</gene>
<protein>
    <recommendedName>
        <fullName evidence="1">Translation initiation factor IF-1 1</fullName>
    </recommendedName>
</protein>
<sequence length="87" mass="9857">MAKEELLELDGIVDEVLPDSKYRVTLENGVVVGAYASGRMRKNHIRILAGDRVTLELSVYDLTKGRINFRHKDANSPRPPRTGQPRR</sequence>
<comment type="function">
    <text evidence="1">One of the essential components for the initiation of protein synthesis. Stabilizes the binding of IF-2 and IF-3 on the 30S subunit to which N-formylmethionyl-tRNA(fMet) subsequently binds. Helps modulate mRNA selection, yielding the 30S pre-initiation complex (PIC). Upon addition of the 50S ribosomal subunit IF-1, IF-2 and IF-3 are released leaving the mature 70S translation initiation complex.</text>
</comment>
<comment type="subunit">
    <text evidence="1">Component of the 30S ribosomal translation pre-initiation complex which assembles on the 30S ribosome in the order IF-2 and IF-3, IF-1 and N-formylmethionyl-tRNA(fMet); mRNA recruitment can occur at any time during PIC assembly.</text>
</comment>
<comment type="subcellular location">
    <subcellularLocation>
        <location evidence="1">Cytoplasm</location>
    </subcellularLocation>
</comment>
<comment type="similarity">
    <text evidence="1">Belongs to the IF-1 family.</text>
</comment>
<reference key="1">
    <citation type="submission" date="2005-10" db="EMBL/GenBank/DDBJ databases">
        <title>Complete sequence of chromosome 2 of Burkholderia sp. 383.</title>
        <authorList>
            <consortium name="US DOE Joint Genome Institute"/>
            <person name="Copeland A."/>
            <person name="Lucas S."/>
            <person name="Lapidus A."/>
            <person name="Barry K."/>
            <person name="Detter J.C."/>
            <person name="Glavina T."/>
            <person name="Hammon N."/>
            <person name="Israni S."/>
            <person name="Pitluck S."/>
            <person name="Chain P."/>
            <person name="Malfatti S."/>
            <person name="Shin M."/>
            <person name="Vergez L."/>
            <person name="Schmutz J."/>
            <person name="Larimer F."/>
            <person name="Land M."/>
            <person name="Kyrpides N."/>
            <person name="Lykidis A."/>
            <person name="Richardson P."/>
        </authorList>
    </citation>
    <scope>NUCLEOTIDE SEQUENCE [LARGE SCALE GENOMIC DNA]</scope>
    <source>
        <strain>ATCC 17760 / DSM 23089 / LMG 22485 / NCIMB 9086 / R18194 / 383</strain>
    </source>
</reference>
<dbReference type="EMBL" id="CP000152">
    <property type="protein sequence ID" value="ABB11564.1"/>
    <property type="molecule type" value="Genomic_DNA"/>
</dbReference>
<dbReference type="SMR" id="Q396P7"/>
<dbReference type="KEGG" id="bur:Bcep18194_B1450"/>
<dbReference type="PATRIC" id="fig|482957.22.peg.5144"/>
<dbReference type="HOGENOM" id="CLU_151267_4_1_4"/>
<dbReference type="Proteomes" id="UP000002705">
    <property type="component" value="Chromosome 2"/>
</dbReference>
<dbReference type="GO" id="GO:0005829">
    <property type="term" value="C:cytosol"/>
    <property type="evidence" value="ECO:0007669"/>
    <property type="project" value="TreeGrafter"/>
</dbReference>
<dbReference type="GO" id="GO:0043022">
    <property type="term" value="F:ribosome binding"/>
    <property type="evidence" value="ECO:0007669"/>
    <property type="project" value="UniProtKB-UniRule"/>
</dbReference>
<dbReference type="GO" id="GO:0019843">
    <property type="term" value="F:rRNA binding"/>
    <property type="evidence" value="ECO:0007669"/>
    <property type="project" value="UniProtKB-UniRule"/>
</dbReference>
<dbReference type="GO" id="GO:0003743">
    <property type="term" value="F:translation initiation factor activity"/>
    <property type="evidence" value="ECO:0007669"/>
    <property type="project" value="UniProtKB-UniRule"/>
</dbReference>
<dbReference type="CDD" id="cd04451">
    <property type="entry name" value="S1_IF1"/>
    <property type="match status" value="1"/>
</dbReference>
<dbReference type="FunFam" id="2.40.50.140:FF:000002">
    <property type="entry name" value="Translation initiation factor IF-1"/>
    <property type="match status" value="1"/>
</dbReference>
<dbReference type="Gene3D" id="2.40.50.140">
    <property type="entry name" value="Nucleic acid-binding proteins"/>
    <property type="match status" value="1"/>
</dbReference>
<dbReference type="HAMAP" id="MF_00075">
    <property type="entry name" value="IF_1"/>
    <property type="match status" value="1"/>
</dbReference>
<dbReference type="InterPro" id="IPR012340">
    <property type="entry name" value="NA-bd_OB-fold"/>
</dbReference>
<dbReference type="InterPro" id="IPR006196">
    <property type="entry name" value="RNA-binding_domain_S1_IF1"/>
</dbReference>
<dbReference type="InterPro" id="IPR004368">
    <property type="entry name" value="TIF_IF1"/>
</dbReference>
<dbReference type="NCBIfam" id="TIGR00008">
    <property type="entry name" value="infA"/>
    <property type="match status" value="1"/>
</dbReference>
<dbReference type="PANTHER" id="PTHR33370">
    <property type="entry name" value="TRANSLATION INITIATION FACTOR IF-1, CHLOROPLASTIC"/>
    <property type="match status" value="1"/>
</dbReference>
<dbReference type="PANTHER" id="PTHR33370:SF1">
    <property type="entry name" value="TRANSLATION INITIATION FACTOR IF-1, CHLOROPLASTIC"/>
    <property type="match status" value="1"/>
</dbReference>
<dbReference type="Pfam" id="PF01176">
    <property type="entry name" value="eIF-1a"/>
    <property type="match status" value="1"/>
</dbReference>
<dbReference type="SUPFAM" id="SSF50249">
    <property type="entry name" value="Nucleic acid-binding proteins"/>
    <property type="match status" value="1"/>
</dbReference>
<dbReference type="PROSITE" id="PS50832">
    <property type="entry name" value="S1_IF1_TYPE"/>
    <property type="match status" value="1"/>
</dbReference>
<accession>Q396P7</accession>
<organism>
    <name type="scientific">Burkholderia lata (strain ATCC 17760 / DSM 23089 / LMG 22485 / NCIMB 9086 / R18194 / 383)</name>
    <dbReference type="NCBI Taxonomy" id="482957"/>
    <lineage>
        <taxon>Bacteria</taxon>
        <taxon>Pseudomonadati</taxon>
        <taxon>Pseudomonadota</taxon>
        <taxon>Betaproteobacteria</taxon>
        <taxon>Burkholderiales</taxon>
        <taxon>Burkholderiaceae</taxon>
        <taxon>Burkholderia</taxon>
        <taxon>Burkholderia cepacia complex</taxon>
    </lineage>
</organism>
<keyword id="KW-0963">Cytoplasm</keyword>
<keyword id="KW-0396">Initiation factor</keyword>
<keyword id="KW-0648">Protein biosynthesis</keyword>
<keyword id="KW-0694">RNA-binding</keyword>
<keyword id="KW-0699">rRNA-binding</keyword>
<feature type="chain" id="PRO_0000263775" description="Translation initiation factor IF-1 1">
    <location>
        <begin position="1"/>
        <end position="87"/>
    </location>
</feature>
<feature type="domain" description="S1-like" evidence="1">
    <location>
        <begin position="1"/>
        <end position="72"/>
    </location>
</feature>
<feature type="region of interest" description="Disordered" evidence="2">
    <location>
        <begin position="68"/>
        <end position="87"/>
    </location>
</feature>
<feature type="compositionally biased region" description="Pro residues" evidence="2">
    <location>
        <begin position="77"/>
        <end position="87"/>
    </location>
</feature>
<evidence type="ECO:0000255" key="1">
    <source>
        <dbReference type="HAMAP-Rule" id="MF_00075"/>
    </source>
</evidence>
<evidence type="ECO:0000256" key="2">
    <source>
        <dbReference type="SAM" id="MobiDB-lite"/>
    </source>
</evidence>